<keyword id="KW-0067">ATP-binding</keyword>
<keyword id="KW-0963">Cytoplasm</keyword>
<keyword id="KW-1015">Disulfide bond</keyword>
<keyword id="KW-0547">Nucleotide-binding</keyword>
<keyword id="KW-0694">RNA-binding</keyword>
<keyword id="KW-0808">Transferase</keyword>
<keyword id="KW-0819">tRNA processing</keyword>
<keyword id="KW-0820">tRNA-binding</keyword>
<accession>Q31GM9</accession>
<feature type="chain" id="PRO_0000349849" description="tRNA-specific 2-thiouridylase MnmA">
    <location>
        <begin position="1"/>
        <end position="379"/>
    </location>
</feature>
<feature type="region of interest" description="Interaction with target base in tRNA" evidence="1">
    <location>
        <begin position="102"/>
        <end position="104"/>
    </location>
</feature>
<feature type="region of interest" description="Interaction with tRNA" evidence="1">
    <location>
        <begin position="154"/>
        <end position="156"/>
    </location>
</feature>
<feature type="region of interest" description="Interaction with tRNA" evidence="1">
    <location>
        <begin position="316"/>
        <end position="317"/>
    </location>
</feature>
<feature type="active site" description="Nucleophile" evidence="1">
    <location>
        <position position="107"/>
    </location>
</feature>
<feature type="active site" description="Cysteine persulfide intermediate" evidence="1">
    <location>
        <position position="204"/>
    </location>
</feature>
<feature type="binding site" evidence="1">
    <location>
        <begin position="16"/>
        <end position="23"/>
    </location>
    <ligand>
        <name>ATP</name>
        <dbReference type="ChEBI" id="CHEBI:30616"/>
    </ligand>
</feature>
<feature type="binding site" evidence="1">
    <location>
        <position position="42"/>
    </location>
    <ligand>
        <name>ATP</name>
        <dbReference type="ChEBI" id="CHEBI:30616"/>
    </ligand>
</feature>
<feature type="binding site" evidence="1">
    <location>
        <position position="131"/>
    </location>
    <ligand>
        <name>ATP</name>
        <dbReference type="ChEBI" id="CHEBI:30616"/>
    </ligand>
</feature>
<feature type="site" description="Interaction with tRNA" evidence="1">
    <location>
        <position position="132"/>
    </location>
</feature>
<feature type="site" description="Interaction with tRNA" evidence="1">
    <location>
        <position position="349"/>
    </location>
</feature>
<feature type="disulfide bond" description="Alternate" evidence="1">
    <location>
        <begin position="107"/>
        <end position="204"/>
    </location>
</feature>
<gene>
    <name evidence="1" type="primary">mnmA</name>
    <name type="ordered locus">Tcr_1099</name>
</gene>
<sequence length="379" mass="42378">MQTSKQDNSNIKVIVGLSGGVDSSVTALLLKQQGYDVEGLFMKNWEGDDTEDYCPAAEDLKDVLAICEKLDIPLHVENFSGEYWDRVFEHFLAEYQSGRTPNPDILCNKEVKFKAFLEHAMTLGADYIATGHYARISRDENGQCYLLKGLDNNKDQSYFLYTLQQHQLSKSMFPIGELEKPYVRQLAEEADLITHDKKDSTGICFIGERKFKDFLQQFLPAQPGDIVNTEGEVIGHHEGLMYHTLGQRKGLGIGGGFGDSGLPWFSADKNLETNQLIAVQGSDHPLLNHAFLTADTCDWVSGHCPALKQALKAKVRYRQPEQPCQILSEKNGEIIVQFDEEQTAITPGQSVVFYEGETCLGGAIITGRYHSLSEINEDK</sequence>
<name>MNMA_HYDCU</name>
<proteinExistence type="inferred from homology"/>
<comment type="function">
    <text evidence="1">Catalyzes the 2-thiolation of uridine at the wobble position (U34) of tRNA, leading to the formation of s(2)U34.</text>
</comment>
<comment type="catalytic activity">
    <reaction evidence="1">
        <text>S-sulfanyl-L-cysteinyl-[protein] + uridine(34) in tRNA + AH2 + ATP = 2-thiouridine(34) in tRNA + L-cysteinyl-[protein] + A + AMP + diphosphate + H(+)</text>
        <dbReference type="Rhea" id="RHEA:47032"/>
        <dbReference type="Rhea" id="RHEA-COMP:10131"/>
        <dbReference type="Rhea" id="RHEA-COMP:11726"/>
        <dbReference type="Rhea" id="RHEA-COMP:11727"/>
        <dbReference type="Rhea" id="RHEA-COMP:11728"/>
        <dbReference type="ChEBI" id="CHEBI:13193"/>
        <dbReference type="ChEBI" id="CHEBI:15378"/>
        <dbReference type="ChEBI" id="CHEBI:17499"/>
        <dbReference type="ChEBI" id="CHEBI:29950"/>
        <dbReference type="ChEBI" id="CHEBI:30616"/>
        <dbReference type="ChEBI" id="CHEBI:33019"/>
        <dbReference type="ChEBI" id="CHEBI:61963"/>
        <dbReference type="ChEBI" id="CHEBI:65315"/>
        <dbReference type="ChEBI" id="CHEBI:87170"/>
        <dbReference type="ChEBI" id="CHEBI:456215"/>
        <dbReference type="EC" id="2.8.1.13"/>
    </reaction>
</comment>
<comment type="subcellular location">
    <subcellularLocation>
        <location evidence="1">Cytoplasm</location>
    </subcellularLocation>
</comment>
<comment type="similarity">
    <text evidence="1">Belongs to the MnmA/TRMU family.</text>
</comment>
<organism>
    <name type="scientific">Hydrogenovibrio crunogenus (strain DSM 25203 / XCL-2)</name>
    <name type="common">Thiomicrospira crunogena</name>
    <dbReference type="NCBI Taxonomy" id="317025"/>
    <lineage>
        <taxon>Bacteria</taxon>
        <taxon>Pseudomonadati</taxon>
        <taxon>Pseudomonadota</taxon>
        <taxon>Gammaproteobacteria</taxon>
        <taxon>Thiotrichales</taxon>
        <taxon>Piscirickettsiaceae</taxon>
        <taxon>Hydrogenovibrio</taxon>
    </lineage>
</organism>
<protein>
    <recommendedName>
        <fullName evidence="1">tRNA-specific 2-thiouridylase MnmA</fullName>
        <ecNumber evidence="1">2.8.1.13</ecNumber>
    </recommendedName>
</protein>
<dbReference type="EC" id="2.8.1.13" evidence="1"/>
<dbReference type="EMBL" id="CP000109">
    <property type="protein sequence ID" value="ABB41694.1"/>
    <property type="molecule type" value="Genomic_DNA"/>
</dbReference>
<dbReference type="SMR" id="Q31GM9"/>
<dbReference type="STRING" id="317025.Tcr_1099"/>
<dbReference type="KEGG" id="tcx:Tcr_1099"/>
<dbReference type="eggNOG" id="COG0482">
    <property type="taxonomic scope" value="Bacteria"/>
</dbReference>
<dbReference type="HOGENOM" id="CLU_035188_1_0_6"/>
<dbReference type="OrthoDB" id="9800696at2"/>
<dbReference type="GO" id="GO:0005737">
    <property type="term" value="C:cytoplasm"/>
    <property type="evidence" value="ECO:0007669"/>
    <property type="project" value="UniProtKB-SubCell"/>
</dbReference>
<dbReference type="GO" id="GO:0005524">
    <property type="term" value="F:ATP binding"/>
    <property type="evidence" value="ECO:0007669"/>
    <property type="project" value="UniProtKB-KW"/>
</dbReference>
<dbReference type="GO" id="GO:0000049">
    <property type="term" value="F:tRNA binding"/>
    <property type="evidence" value="ECO:0007669"/>
    <property type="project" value="UniProtKB-KW"/>
</dbReference>
<dbReference type="GO" id="GO:0103016">
    <property type="term" value="F:tRNA-uridine 2-sulfurtransferase activity"/>
    <property type="evidence" value="ECO:0007669"/>
    <property type="project" value="UniProtKB-EC"/>
</dbReference>
<dbReference type="GO" id="GO:0002143">
    <property type="term" value="P:tRNA wobble position uridine thiolation"/>
    <property type="evidence" value="ECO:0007669"/>
    <property type="project" value="TreeGrafter"/>
</dbReference>
<dbReference type="CDD" id="cd01998">
    <property type="entry name" value="MnmA_TRMU-like"/>
    <property type="match status" value="1"/>
</dbReference>
<dbReference type="FunFam" id="2.30.30.280:FF:000001">
    <property type="entry name" value="tRNA-specific 2-thiouridylase MnmA"/>
    <property type="match status" value="1"/>
</dbReference>
<dbReference type="FunFam" id="2.40.30.10:FF:000023">
    <property type="entry name" value="tRNA-specific 2-thiouridylase MnmA"/>
    <property type="match status" value="1"/>
</dbReference>
<dbReference type="FunFam" id="3.40.50.620:FF:000004">
    <property type="entry name" value="tRNA-specific 2-thiouridylase MnmA"/>
    <property type="match status" value="1"/>
</dbReference>
<dbReference type="Gene3D" id="2.30.30.280">
    <property type="entry name" value="Adenine nucleotide alpha hydrolases-like domains"/>
    <property type="match status" value="1"/>
</dbReference>
<dbReference type="Gene3D" id="3.40.50.620">
    <property type="entry name" value="HUPs"/>
    <property type="match status" value="1"/>
</dbReference>
<dbReference type="Gene3D" id="2.40.30.10">
    <property type="entry name" value="Translation factors"/>
    <property type="match status" value="1"/>
</dbReference>
<dbReference type="HAMAP" id="MF_00144">
    <property type="entry name" value="tRNA_thiouridyl_MnmA"/>
    <property type="match status" value="1"/>
</dbReference>
<dbReference type="InterPro" id="IPR004506">
    <property type="entry name" value="MnmA-like"/>
</dbReference>
<dbReference type="InterPro" id="IPR046885">
    <property type="entry name" value="MnmA-like_C"/>
</dbReference>
<dbReference type="InterPro" id="IPR046884">
    <property type="entry name" value="MnmA-like_central"/>
</dbReference>
<dbReference type="InterPro" id="IPR023382">
    <property type="entry name" value="MnmA-like_central_sf"/>
</dbReference>
<dbReference type="InterPro" id="IPR014729">
    <property type="entry name" value="Rossmann-like_a/b/a_fold"/>
</dbReference>
<dbReference type="NCBIfam" id="NF001138">
    <property type="entry name" value="PRK00143.1"/>
    <property type="match status" value="1"/>
</dbReference>
<dbReference type="NCBIfam" id="TIGR00420">
    <property type="entry name" value="trmU"/>
    <property type="match status" value="1"/>
</dbReference>
<dbReference type="PANTHER" id="PTHR11933:SF5">
    <property type="entry name" value="MITOCHONDRIAL TRNA-SPECIFIC 2-THIOURIDYLASE 1"/>
    <property type="match status" value="1"/>
</dbReference>
<dbReference type="PANTHER" id="PTHR11933">
    <property type="entry name" value="TRNA 5-METHYLAMINOMETHYL-2-THIOURIDYLATE -METHYLTRANSFERASE"/>
    <property type="match status" value="1"/>
</dbReference>
<dbReference type="Pfam" id="PF03054">
    <property type="entry name" value="tRNA_Me_trans"/>
    <property type="match status" value="1"/>
</dbReference>
<dbReference type="Pfam" id="PF20258">
    <property type="entry name" value="tRNA_Me_trans_C"/>
    <property type="match status" value="1"/>
</dbReference>
<dbReference type="Pfam" id="PF20259">
    <property type="entry name" value="tRNA_Me_trans_M"/>
    <property type="match status" value="1"/>
</dbReference>
<dbReference type="SUPFAM" id="SSF52402">
    <property type="entry name" value="Adenine nucleotide alpha hydrolases-like"/>
    <property type="match status" value="1"/>
</dbReference>
<reference key="1">
    <citation type="journal article" date="2006" name="PLoS Biol.">
        <title>The genome of deep-sea vent chemolithoautotroph Thiomicrospira crunogena XCL-2.</title>
        <authorList>
            <person name="Scott K.M."/>
            <person name="Sievert S.M."/>
            <person name="Abril F.N."/>
            <person name="Ball L.A."/>
            <person name="Barrett C.J."/>
            <person name="Blake R.A."/>
            <person name="Boller A.J."/>
            <person name="Chain P.S.G."/>
            <person name="Clark J.A."/>
            <person name="Davis C.R."/>
            <person name="Detter C."/>
            <person name="Do K.F."/>
            <person name="Dobrinski K.P."/>
            <person name="Faza B.I."/>
            <person name="Fitzpatrick K.A."/>
            <person name="Freyermuth S.K."/>
            <person name="Harmer T.L."/>
            <person name="Hauser L.J."/>
            <person name="Huegler M."/>
            <person name="Kerfeld C.A."/>
            <person name="Klotz M.G."/>
            <person name="Kong W.W."/>
            <person name="Land M."/>
            <person name="Lapidus A."/>
            <person name="Larimer F.W."/>
            <person name="Longo D.L."/>
            <person name="Lucas S."/>
            <person name="Malfatti S.A."/>
            <person name="Massey S.E."/>
            <person name="Martin D.D."/>
            <person name="McCuddin Z."/>
            <person name="Meyer F."/>
            <person name="Moore J.L."/>
            <person name="Ocampo L.H. Jr."/>
            <person name="Paul J.H."/>
            <person name="Paulsen I.T."/>
            <person name="Reep D.K."/>
            <person name="Ren Q."/>
            <person name="Ross R.L."/>
            <person name="Sato P.Y."/>
            <person name="Thomas P."/>
            <person name="Tinkham L.E."/>
            <person name="Zeruth G.T."/>
        </authorList>
    </citation>
    <scope>NUCLEOTIDE SEQUENCE [LARGE SCALE GENOMIC DNA]</scope>
    <source>
        <strain>DSM 25203 / XCL-2</strain>
    </source>
</reference>
<evidence type="ECO:0000255" key="1">
    <source>
        <dbReference type="HAMAP-Rule" id="MF_00144"/>
    </source>
</evidence>